<keyword id="KW-0028">Amino-acid biosynthesis</keyword>
<keyword id="KW-0067">ATP-binding</keyword>
<keyword id="KW-0963">Cytoplasm</keyword>
<keyword id="KW-0418">Kinase</keyword>
<keyword id="KW-0547">Nucleotide-binding</keyword>
<keyword id="KW-0641">Proline biosynthesis</keyword>
<keyword id="KW-0808">Transferase</keyword>
<comment type="function">
    <text evidence="1">Catalyzes the transfer of a phosphate group to glutamate to form L-glutamate 5-phosphate.</text>
</comment>
<comment type="catalytic activity">
    <reaction evidence="1">
        <text>L-glutamate + ATP = L-glutamyl 5-phosphate + ADP</text>
        <dbReference type="Rhea" id="RHEA:14877"/>
        <dbReference type="ChEBI" id="CHEBI:29985"/>
        <dbReference type="ChEBI" id="CHEBI:30616"/>
        <dbReference type="ChEBI" id="CHEBI:58274"/>
        <dbReference type="ChEBI" id="CHEBI:456216"/>
        <dbReference type="EC" id="2.7.2.11"/>
    </reaction>
</comment>
<comment type="pathway">
    <text evidence="1">Amino-acid biosynthesis; L-proline biosynthesis; L-glutamate 5-semialdehyde from L-glutamate: step 1/2.</text>
</comment>
<comment type="subcellular location">
    <subcellularLocation>
        <location evidence="1">Cytoplasm</location>
    </subcellularLocation>
</comment>
<comment type="similarity">
    <text evidence="1">Belongs to the glutamate 5-kinase family.</text>
</comment>
<evidence type="ECO:0000255" key="1">
    <source>
        <dbReference type="HAMAP-Rule" id="MF_00456"/>
    </source>
</evidence>
<reference key="1">
    <citation type="journal article" date="2006" name="J. Bacteriol.">
        <title>Complete genome sequence of Yersinia pestis strains Antiqua and Nepal516: evidence of gene reduction in an emerging pathogen.</title>
        <authorList>
            <person name="Chain P.S.G."/>
            <person name="Hu P."/>
            <person name="Malfatti S.A."/>
            <person name="Radnedge L."/>
            <person name="Larimer F."/>
            <person name="Vergez L.M."/>
            <person name="Worsham P."/>
            <person name="Chu M.C."/>
            <person name="Andersen G.L."/>
        </authorList>
    </citation>
    <scope>NUCLEOTIDE SEQUENCE [LARGE SCALE GENOMIC DNA]</scope>
    <source>
        <strain>Antiqua</strain>
    </source>
</reference>
<proteinExistence type="inferred from homology"/>
<sequence>MSGSQTLVVKLGTSVLTGGSRRLNRAHIVELVRQCAQQHAKGHRIVIVTFGAIAAGREHLGYPELPATIASKQLLAAVGQSRLIQLWEQLFSIYGIHIGQMLLTRADLEDRERFLNARDTMNALLDNRIVPVINENDAVATAEIKVGDNDNLSALAAILASADKLLLLTDQAGLYTADPRNNPEAELIREVHGIDDVLRGMAGDSVSGLGTGGMATKLQAADVACRAGIDVVIAAGSQVGVIADVIDGTPVGTRFHSLETPLENRKRWIFGAPPAGEITVDDGAVFAIMERGSSLLPKGIRSVKGDFSRGEVIRIRNLNGRDLAHGVSRYNSDALRMLAGHHSQQISEILGYEYGPVAVHRDDMIVS</sequence>
<gene>
    <name evidence="1" type="primary">proB</name>
    <name type="ordered locus">YPA_2714</name>
</gene>
<feature type="chain" id="PRO_0000253014" description="Glutamate 5-kinase">
    <location>
        <begin position="1"/>
        <end position="367"/>
    </location>
</feature>
<feature type="domain" description="PUA" evidence="1">
    <location>
        <begin position="275"/>
        <end position="353"/>
    </location>
</feature>
<feature type="binding site" evidence="1">
    <location>
        <position position="10"/>
    </location>
    <ligand>
        <name>ATP</name>
        <dbReference type="ChEBI" id="CHEBI:30616"/>
    </ligand>
</feature>
<feature type="binding site" evidence="1">
    <location>
        <position position="137"/>
    </location>
    <ligand>
        <name>substrate</name>
    </ligand>
</feature>
<feature type="binding site" evidence="1">
    <location>
        <position position="149"/>
    </location>
    <ligand>
        <name>substrate</name>
    </ligand>
</feature>
<feature type="binding site" evidence="1">
    <location>
        <begin position="169"/>
        <end position="170"/>
    </location>
    <ligand>
        <name>ATP</name>
        <dbReference type="ChEBI" id="CHEBI:30616"/>
    </ligand>
</feature>
<feature type="binding site" evidence="1">
    <location>
        <begin position="211"/>
        <end position="217"/>
    </location>
    <ligand>
        <name>ATP</name>
        <dbReference type="ChEBI" id="CHEBI:30616"/>
    </ligand>
</feature>
<organism>
    <name type="scientific">Yersinia pestis bv. Antiqua (strain Antiqua)</name>
    <dbReference type="NCBI Taxonomy" id="360102"/>
    <lineage>
        <taxon>Bacteria</taxon>
        <taxon>Pseudomonadati</taxon>
        <taxon>Pseudomonadota</taxon>
        <taxon>Gammaproteobacteria</taxon>
        <taxon>Enterobacterales</taxon>
        <taxon>Yersiniaceae</taxon>
        <taxon>Yersinia</taxon>
    </lineage>
</organism>
<accession>Q1C4E6</accession>
<name>PROB_YERPA</name>
<protein>
    <recommendedName>
        <fullName evidence="1">Glutamate 5-kinase</fullName>
        <ecNumber evidence="1">2.7.2.11</ecNumber>
    </recommendedName>
    <alternativeName>
        <fullName evidence="1">Gamma-glutamyl kinase</fullName>
        <shortName evidence="1">GK</shortName>
    </alternativeName>
</protein>
<dbReference type="EC" id="2.7.2.11" evidence="1"/>
<dbReference type="EMBL" id="CP000308">
    <property type="protein sequence ID" value="ABG14676.1"/>
    <property type="molecule type" value="Genomic_DNA"/>
</dbReference>
<dbReference type="RefSeq" id="WP_002264517.1">
    <property type="nucleotide sequence ID" value="NC_008150.1"/>
</dbReference>
<dbReference type="SMR" id="Q1C4E6"/>
<dbReference type="KEGG" id="ypa:YPA_2714"/>
<dbReference type="UniPathway" id="UPA00098">
    <property type="reaction ID" value="UER00359"/>
</dbReference>
<dbReference type="Proteomes" id="UP000001971">
    <property type="component" value="Chromosome"/>
</dbReference>
<dbReference type="GO" id="GO:0005829">
    <property type="term" value="C:cytosol"/>
    <property type="evidence" value="ECO:0007669"/>
    <property type="project" value="TreeGrafter"/>
</dbReference>
<dbReference type="GO" id="GO:0005524">
    <property type="term" value="F:ATP binding"/>
    <property type="evidence" value="ECO:0007669"/>
    <property type="project" value="UniProtKB-KW"/>
</dbReference>
<dbReference type="GO" id="GO:0004349">
    <property type="term" value="F:glutamate 5-kinase activity"/>
    <property type="evidence" value="ECO:0007669"/>
    <property type="project" value="UniProtKB-UniRule"/>
</dbReference>
<dbReference type="GO" id="GO:0003723">
    <property type="term" value="F:RNA binding"/>
    <property type="evidence" value="ECO:0007669"/>
    <property type="project" value="InterPro"/>
</dbReference>
<dbReference type="GO" id="GO:0055129">
    <property type="term" value="P:L-proline biosynthetic process"/>
    <property type="evidence" value="ECO:0007669"/>
    <property type="project" value="UniProtKB-UniRule"/>
</dbReference>
<dbReference type="CDD" id="cd04242">
    <property type="entry name" value="AAK_G5K_ProB"/>
    <property type="match status" value="1"/>
</dbReference>
<dbReference type="CDD" id="cd21157">
    <property type="entry name" value="PUA_G5K"/>
    <property type="match status" value="1"/>
</dbReference>
<dbReference type="FunFam" id="2.30.130.10:FF:000003">
    <property type="entry name" value="Glutamate 5-kinase"/>
    <property type="match status" value="1"/>
</dbReference>
<dbReference type="FunFam" id="3.40.1160.10:FF:000006">
    <property type="entry name" value="Glutamate 5-kinase"/>
    <property type="match status" value="1"/>
</dbReference>
<dbReference type="Gene3D" id="3.40.1160.10">
    <property type="entry name" value="Acetylglutamate kinase-like"/>
    <property type="match status" value="2"/>
</dbReference>
<dbReference type="Gene3D" id="2.30.130.10">
    <property type="entry name" value="PUA domain"/>
    <property type="match status" value="1"/>
</dbReference>
<dbReference type="HAMAP" id="MF_00456">
    <property type="entry name" value="ProB"/>
    <property type="match status" value="1"/>
</dbReference>
<dbReference type="InterPro" id="IPR036393">
    <property type="entry name" value="AceGlu_kinase-like_sf"/>
</dbReference>
<dbReference type="InterPro" id="IPR001048">
    <property type="entry name" value="Asp/Glu/Uridylate_kinase"/>
</dbReference>
<dbReference type="InterPro" id="IPR041739">
    <property type="entry name" value="G5K_ProB"/>
</dbReference>
<dbReference type="InterPro" id="IPR001057">
    <property type="entry name" value="Glu/AcGlu_kinase"/>
</dbReference>
<dbReference type="InterPro" id="IPR011529">
    <property type="entry name" value="Glu_5kinase"/>
</dbReference>
<dbReference type="InterPro" id="IPR005715">
    <property type="entry name" value="Glu_5kinase/COase_Synthase"/>
</dbReference>
<dbReference type="InterPro" id="IPR019797">
    <property type="entry name" value="Glutamate_5-kinase_CS"/>
</dbReference>
<dbReference type="InterPro" id="IPR002478">
    <property type="entry name" value="PUA"/>
</dbReference>
<dbReference type="InterPro" id="IPR015947">
    <property type="entry name" value="PUA-like_sf"/>
</dbReference>
<dbReference type="InterPro" id="IPR036974">
    <property type="entry name" value="PUA_sf"/>
</dbReference>
<dbReference type="NCBIfam" id="TIGR01027">
    <property type="entry name" value="proB"/>
    <property type="match status" value="1"/>
</dbReference>
<dbReference type="PANTHER" id="PTHR43654">
    <property type="entry name" value="GLUTAMATE 5-KINASE"/>
    <property type="match status" value="1"/>
</dbReference>
<dbReference type="PANTHER" id="PTHR43654:SF1">
    <property type="entry name" value="ISOPENTENYL PHOSPHATE KINASE"/>
    <property type="match status" value="1"/>
</dbReference>
<dbReference type="Pfam" id="PF00696">
    <property type="entry name" value="AA_kinase"/>
    <property type="match status" value="1"/>
</dbReference>
<dbReference type="Pfam" id="PF01472">
    <property type="entry name" value="PUA"/>
    <property type="match status" value="1"/>
</dbReference>
<dbReference type="PIRSF" id="PIRSF000729">
    <property type="entry name" value="GK"/>
    <property type="match status" value="1"/>
</dbReference>
<dbReference type="PRINTS" id="PR00474">
    <property type="entry name" value="GLU5KINASE"/>
</dbReference>
<dbReference type="SMART" id="SM00359">
    <property type="entry name" value="PUA"/>
    <property type="match status" value="1"/>
</dbReference>
<dbReference type="SUPFAM" id="SSF53633">
    <property type="entry name" value="Carbamate kinase-like"/>
    <property type="match status" value="1"/>
</dbReference>
<dbReference type="SUPFAM" id="SSF88697">
    <property type="entry name" value="PUA domain-like"/>
    <property type="match status" value="1"/>
</dbReference>
<dbReference type="PROSITE" id="PS00902">
    <property type="entry name" value="GLUTAMATE_5_KINASE"/>
    <property type="match status" value="1"/>
</dbReference>
<dbReference type="PROSITE" id="PS50890">
    <property type="entry name" value="PUA"/>
    <property type="match status" value="1"/>
</dbReference>